<sequence>MFIENFKVESPNVKYTESEIHSVYDYQTTELVHDEKNGTYQWTVKPKTVKYEFKTDVHVPKLGVMLVGWGGNNGSTLTGGVIANREGISWATKDKVQQANYFGSLTQASTIRVGSFNGEEIYAPFKSLLPMVNPDDVVFGGWDISDMNLADAMARAKVFDIDLQKQLRPYMESMVPLPGIYDPDFIAANQGSRANNVIKGTKKEQIDQIIKDIREFKEKNKVDKVVVLWTANTERYSNVVVGLNDTMENLFASVDRNEAEISPSTLYAIACILENVPFINGSPQNTFVPGLIDLAIKKNTLIGGDDFKSGQTKMKSVLVDFLVGAGIKPTSIVSYNHLGNNDGMNLSAPQTFRSKEISKSNVVDDMVSSNAILYEPGEHPDHVVVIKYVPYVGDSKRAMDEYTSEIFMGGKNTIVLHNTCEDSLLAAPIILDLVLLAELSTRIQLKAEGEGKFHSFHPVATILSYLTKAPLVPPGTPVVNALSKQRAMLENILRACVGLAPENNMILEYK</sequence>
<name>INO1_NICPA</name>
<evidence type="ECO:0000250" key="1">
    <source>
        <dbReference type="UniProtKB" id="P11986"/>
    </source>
</evidence>
<evidence type="ECO:0000250" key="2">
    <source>
        <dbReference type="UniProtKB" id="P42801"/>
    </source>
</evidence>
<evidence type="ECO:0000305" key="3"/>
<protein>
    <recommendedName>
        <fullName>Inositol-3-phosphate synthase</fullName>
        <shortName>MIP synthase</shortName>
        <ecNumber evidence="2">5.5.1.4</ecNumber>
    </recommendedName>
    <alternativeName>
        <fullName>Myo-inositol 1-phosphate synthase</fullName>
        <shortName>IPS</shortName>
        <shortName>MI-1-P synthase</shortName>
    </alternativeName>
</protein>
<reference key="1">
    <citation type="submission" date="1999-09" db="EMBL/GenBank/DDBJ databases">
        <authorList>
            <person name="Hashimoto A."/>
            <person name="Yamada S."/>
            <person name="Komori T."/>
        </authorList>
    </citation>
    <scope>NUCLEOTIDE SEQUENCE [MRNA]</scope>
</reference>
<comment type="function">
    <text evidence="2">Key enzyme in myo-inositol biosynthesis pathway that catalyzes the conversion of glucose 6-phosphate to 1-myo-inositol 1-phosphate in a NAD-dependent manner.</text>
</comment>
<comment type="catalytic activity">
    <reaction evidence="2">
        <text>D-glucose 6-phosphate = 1D-myo-inositol 3-phosphate</text>
        <dbReference type="Rhea" id="RHEA:10716"/>
        <dbReference type="ChEBI" id="CHEBI:58401"/>
        <dbReference type="ChEBI" id="CHEBI:61548"/>
        <dbReference type="EC" id="5.5.1.4"/>
    </reaction>
</comment>
<comment type="cofactor">
    <cofactor evidence="2">
        <name>NAD(+)</name>
        <dbReference type="ChEBI" id="CHEBI:57540"/>
    </cofactor>
</comment>
<comment type="pathway">
    <text>Polyol metabolism; myo-inositol biosynthesis; myo-inositol from D-glucose 6-phosphate: step 1/2.</text>
</comment>
<comment type="subcellular location">
    <subcellularLocation>
        <location evidence="2">Cytoplasm</location>
        <location evidence="2">Cytosol</location>
    </subcellularLocation>
    <subcellularLocation>
        <location evidence="2">Nucleus</location>
    </subcellularLocation>
</comment>
<comment type="similarity">
    <text evidence="3">Belongs to the myo-inositol 1-phosphate synthase family.</text>
</comment>
<feature type="chain" id="PRO_0000195194" description="Inositol-3-phosphate synthase">
    <location>
        <begin position="1"/>
        <end position="510"/>
    </location>
</feature>
<feature type="binding site" evidence="1">
    <location>
        <position position="70"/>
    </location>
    <ligand>
        <name>NAD(+)</name>
        <dbReference type="ChEBI" id="CHEBI:57540"/>
    </ligand>
</feature>
<feature type="binding site" evidence="1">
    <location>
        <position position="71"/>
    </location>
    <ligand>
        <name>NAD(+)</name>
        <dbReference type="ChEBI" id="CHEBI:57540"/>
    </ligand>
</feature>
<feature type="binding site" evidence="1">
    <location>
        <position position="72"/>
    </location>
    <ligand>
        <name>NAD(+)</name>
        <dbReference type="ChEBI" id="CHEBI:57540"/>
    </ligand>
</feature>
<feature type="binding site" evidence="1">
    <location>
        <position position="73"/>
    </location>
    <ligand>
        <name>NAD(+)</name>
        <dbReference type="ChEBI" id="CHEBI:57540"/>
    </ligand>
</feature>
<feature type="binding site" evidence="1">
    <location>
        <position position="143"/>
    </location>
    <ligand>
        <name>NAD(+)</name>
        <dbReference type="ChEBI" id="CHEBI:57540"/>
    </ligand>
</feature>
<feature type="binding site" evidence="1">
    <location>
        <position position="180"/>
    </location>
    <ligand>
        <name>NAD(+)</name>
        <dbReference type="ChEBI" id="CHEBI:57540"/>
    </ligand>
</feature>
<feature type="binding site" evidence="1">
    <location>
        <position position="190"/>
    </location>
    <ligand>
        <name>NAD(+)</name>
        <dbReference type="ChEBI" id="CHEBI:57540"/>
    </ligand>
</feature>
<feature type="binding site" evidence="1">
    <location>
        <position position="193"/>
    </location>
    <ligand>
        <name>NAD(+)</name>
        <dbReference type="ChEBI" id="CHEBI:57540"/>
    </ligand>
</feature>
<feature type="binding site" evidence="1">
    <location>
        <position position="230"/>
    </location>
    <ligand>
        <name>NAD(+)</name>
        <dbReference type="ChEBI" id="CHEBI:57540"/>
    </ligand>
</feature>
<feature type="binding site" evidence="1">
    <location>
        <position position="231"/>
    </location>
    <ligand>
        <name>NAD(+)</name>
        <dbReference type="ChEBI" id="CHEBI:57540"/>
    </ligand>
</feature>
<feature type="binding site" evidence="1">
    <location>
        <position position="232"/>
    </location>
    <ligand>
        <name>NAD(+)</name>
        <dbReference type="ChEBI" id="CHEBI:57540"/>
    </ligand>
</feature>
<feature type="binding site" evidence="1">
    <location>
        <position position="233"/>
    </location>
    <ligand>
        <name>NAD(+)</name>
        <dbReference type="ChEBI" id="CHEBI:57540"/>
    </ligand>
</feature>
<feature type="binding site" evidence="1">
    <location>
        <position position="281"/>
    </location>
    <ligand>
        <name>NAD(+)</name>
        <dbReference type="ChEBI" id="CHEBI:57540"/>
    </ligand>
</feature>
<feature type="binding site" evidence="1">
    <location>
        <position position="282"/>
    </location>
    <ligand>
        <name>NAD(+)</name>
        <dbReference type="ChEBI" id="CHEBI:57540"/>
    </ligand>
</feature>
<feature type="binding site" evidence="1">
    <location>
        <position position="306"/>
    </location>
    <ligand>
        <name>NAD(+)</name>
        <dbReference type="ChEBI" id="CHEBI:57540"/>
    </ligand>
</feature>
<feature type="binding site" evidence="1">
    <location>
        <position position="309"/>
    </location>
    <ligand>
        <name>NAD(+)</name>
        <dbReference type="ChEBI" id="CHEBI:57540"/>
    </ligand>
</feature>
<feature type="binding site" evidence="1">
    <location>
        <position position="340"/>
    </location>
    <ligand>
        <name>NAD(+)</name>
        <dbReference type="ChEBI" id="CHEBI:57540"/>
    </ligand>
</feature>
<feature type="binding site" evidence="1">
    <location>
        <position position="341"/>
    </location>
    <ligand>
        <name>NAD(+)</name>
        <dbReference type="ChEBI" id="CHEBI:57540"/>
    </ligand>
</feature>
<feature type="binding site" evidence="1">
    <location>
        <position position="342"/>
    </location>
    <ligand>
        <name>NAD(+)</name>
        <dbReference type="ChEBI" id="CHEBI:57540"/>
    </ligand>
</feature>
<feature type="binding site" evidence="1">
    <location>
        <position position="355"/>
    </location>
    <ligand>
        <name>NAD(+)</name>
        <dbReference type="ChEBI" id="CHEBI:57540"/>
    </ligand>
</feature>
<feature type="binding site" evidence="1">
    <location>
        <position position="393"/>
    </location>
    <ligand>
        <name>NAD(+)</name>
        <dbReference type="ChEBI" id="CHEBI:57540"/>
    </ligand>
</feature>
<feature type="binding site" evidence="1">
    <location>
        <position position="394"/>
    </location>
    <ligand>
        <name>NAD(+)</name>
        <dbReference type="ChEBI" id="CHEBI:57540"/>
    </ligand>
</feature>
<feature type="binding site" evidence="1">
    <location>
        <position position="422"/>
    </location>
    <ligand>
        <name>NAD(+)</name>
        <dbReference type="ChEBI" id="CHEBI:57540"/>
    </ligand>
</feature>
<feature type="binding site" evidence="1">
    <location>
        <position position="423"/>
    </location>
    <ligand>
        <name>NAD(+)</name>
        <dbReference type="ChEBI" id="CHEBI:57540"/>
    </ligand>
</feature>
<gene>
    <name type="primary">INPS1</name>
</gene>
<organism>
    <name type="scientific">Nicotiana paniculata</name>
    <dbReference type="NCBI Taxonomy" id="62141"/>
    <lineage>
        <taxon>Eukaryota</taxon>
        <taxon>Viridiplantae</taxon>
        <taxon>Streptophyta</taxon>
        <taxon>Embryophyta</taxon>
        <taxon>Tracheophyta</taxon>
        <taxon>Spermatophyta</taxon>
        <taxon>Magnoliopsida</taxon>
        <taxon>eudicotyledons</taxon>
        <taxon>Gunneridae</taxon>
        <taxon>Pentapetalae</taxon>
        <taxon>asterids</taxon>
        <taxon>lamiids</taxon>
        <taxon>Solanales</taxon>
        <taxon>Solanaceae</taxon>
        <taxon>Nicotianoideae</taxon>
        <taxon>Nicotianeae</taxon>
        <taxon>Nicotiana</taxon>
    </lineage>
</organism>
<dbReference type="EC" id="5.5.1.4" evidence="2"/>
<dbReference type="EMBL" id="AB032073">
    <property type="protein sequence ID" value="BAA84084.1"/>
    <property type="molecule type" value="mRNA"/>
</dbReference>
<dbReference type="SMR" id="Q9SSV4"/>
<dbReference type="UniPathway" id="UPA00823">
    <property type="reaction ID" value="UER00787"/>
</dbReference>
<dbReference type="GO" id="GO:0005829">
    <property type="term" value="C:cytosol"/>
    <property type="evidence" value="ECO:0007669"/>
    <property type="project" value="UniProtKB-SubCell"/>
</dbReference>
<dbReference type="GO" id="GO:0005634">
    <property type="term" value="C:nucleus"/>
    <property type="evidence" value="ECO:0007669"/>
    <property type="project" value="UniProtKB-SubCell"/>
</dbReference>
<dbReference type="GO" id="GO:0004512">
    <property type="term" value="F:inositol-3-phosphate synthase activity"/>
    <property type="evidence" value="ECO:0007669"/>
    <property type="project" value="UniProtKB-EC"/>
</dbReference>
<dbReference type="GO" id="GO:0006021">
    <property type="term" value="P:inositol biosynthetic process"/>
    <property type="evidence" value="ECO:0007669"/>
    <property type="project" value="UniProtKB-UniPathway"/>
</dbReference>
<dbReference type="GO" id="GO:0008654">
    <property type="term" value="P:phospholipid biosynthetic process"/>
    <property type="evidence" value="ECO:0007669"/>
    <property type="project" value="UniProtKB-KW"/>
</dbReference>
<dbReference type="FunFam" id="3.30.360.10:FF:000040">
    <property type="entry name" value="Inositol 1-phosphate synthase"/>
    <property type="match status" value="1"/>
</dbReference>
<dbReference type="FunFam" id="3.40.50.720:FF:000107">
    <property type="entry name" value="inositol-3-phosphate synthase"/>
    <property type="match status" value="1"/>
</dbReference>
<dbReference type="FunFam" id="3.40.50.720:FF:000069">
    <property type="entry name" value="Inositol-3-phosphate synthase 1"/>
    <property type="match status" value="1"/>
</dbReference>
<dbReference type="Gene3D" id="3.40.50.720">
    <property type="entry name" value="NAD(P)-binding Rossmann-like Domain"/>
    <property type="match status" value="2"/>
</dbReference>
<dbReference type="InterPro" id="IPR002587">
    <property type="entry name" value="Myo-inos-1-P_Synthase"/>
</dbReference>
<dbReference type="InterPro" id="IPR013021">
    <property type="entry name" value="Myo-inos-1-P_Synthase_GAPDH"/>
</dbReference>
<dbReference type="InterPro" id="IPR036291">
    <property type="entry name" value="NAD(P)-bd_dom_sf"/>
</dbReference>
<dbReference type="PANTHER" id="PTHR11510">
    <property type="entry name" value="MYO-INOSITOL-1 PHOSPHATE SYNTHASE"/>
    <property type="match status" value="1"/>
</dbReference>
<dbReference type="Pfam" id="PF01658">
    <property type="entry name" value="Inos-1-P_synth"/>
    <property type="match status" value="1"/>
</dbReference>
<dbReference type="Pfam" id="PF07994">
    <property type="entry name" value="NAD_binding_5"/>
    <property type="match status" value="1"/>
</dbReference>
<dbReference type="PIRSF" id="PIRSF015578">
    <property type="entry name" value="Myoinos-ppht_syn"/>
    <property type="match status" value="1"/>
</dbReference>
<dbReference type="SUPFAM" id="SSF55347">
    <property type="entry name" value="Glyceraldehyde-3-phosphate dehydrogenase-like, C-terminal domain"/>
    <property type="match status" value="1"/>
</dbReference>
<dbReference type="SUPFAM" id="SSF51735">
    <property type="entry name" value="NAD(P)-binding Rossmann-fold domains"/>
    <property type="match status" value="1"/>
</dbReference>
<accession>Q9SSV4</accession>
<proteinExistence type="evidence at transcript level"/>
<keyword id="KW-0963">Cytoplasm</keyword>
<keyword id="KW-0398">Inositol biosynthesis</keyword>
<keyword id="KW-0413">Isomerase</keyword>
<keyword id="KW-0444">Lipid biosynthesis</keyword>
<keyword id="KW-0443">Lipid metabolism</keyword>
<keyword id="KW-0520">NAD</keyword>
<keyword id="KW-0539">Nucleus</keyword>
<keyword id="KW-0594">Phospholipid biosynthesis</keyword>
<keyword id="KW-1208">Phospholipid metabolism</keyword>